<sequence length="209" mass="22292">MIGLVGKKVGMTRIFTEDGVSIPVTVIEIEANRVTQVKSLENDGYRAVQVTTGAKKANRVTKPEAGHFAKAGVEAGRGLWEFRLPEGQEFTAGQEISVEIFADVKKVDVTGTSKGKGFAGTVKRWNFRTQDATHGNSLSHRVPGSIGQNQTPGKVFKGKKMAGHMGDERVTVQSLDVVRVDAERNLLLVKGAVPGATGGNLIVKPAVKA</sequence>
<dbReference type="EMBL" id="CP000668">
    <property type="protein sequence ID" value="ABP38555.1"/>
    <property type="molecule type" value="Genomic_DNA"/>
</dbReference>
<dbReference type="RefSeq" id="WP_002218932.1">
    <property type="nucleotide sequence ID" value="NZ_CP009715.1"/>
</dbReference>
<dbReference type="SMR" id="A4TGZ2"/>
<dbReference type="GeneID" id="96663196"/>
<dbReference type="KEGG" id="ypp:YPDSF_0133"/>
<dbReference type="PATRIC" id="fig|386656.14.peg.434"/>
<dbReference type="GO" id="GO:0022625">
    <property type="term" value="C:cytosolic large ribosomal subunit"/>
    <property type="evidence" value="ECO:0007669"/>
    <property type="project" value="TreeGrafter"/>
</dbReference>
<dbReference type="GO" id="GO:0019843">
    <property type="term" value="F:rRNA binding"/>
    <property type="evidence" value="ECO:0007669"/>
    <property type="project" value="UniProtKB-UniRule"/>
</dbReference>
<dbReference type="GO" id="GO:0003735">
    <property type="term" value="F:structural constituent of ribosome"/>
    <property type="evidence" value="ECO:0007669"/>
    <property type="project" value="InterPro"/>
</dbReference>
<dbReference type="GO" id="GO:0006412">
    <property type="term" value="P:translation"/>
    <property type="evidence" value="ECO:0007669"/>
    <property type="project" value="UniProtKB-UniRule"/>
</dbReference>
<dbReference type="FunFam" id="2.40.30.10:FF:000004">
    <property type="entry name" value="50S ribosomal protein L3"/>
    <property type="match status" value="1"/>
</dbReference>
<dbReference type="FunFam" id="3.30.160.810:FF:000001">
    <property type="entry name" value="50S ribosomal protein L3"/>
    <property type="match status" value="1"/>
</dbReference>
<dbReference type="Gene3D" id="3.30.160.810">
    <property type="match status" value="1"/>
</dbReference>
<dbReference type="Gene3D" id="2.40.30.10">
    <property type="entry name" value="Translation factors"/>
    <property type="match status" value="1"/>
</dbReference>
<dbReference type="HAMAP" id="MF_01325_B">
    <property type="entry name" value="Ribosomal_uL3_B"/>
    <property type="match status" value="1"/>
</dbReference>
<dbReference type="InterPro" id="IPR000597">
    <property type="entry name" value="Ribosomal_uL3"/>
</dbReference>
<dbReference type="InterPro" id="IPR019927">
    <property type="entry name" value="Ribosomal_uL3_bac/org-type"/>
</dbReference>
<dbReference type="InterPro" id="IPR019926">
    <property type="entry name" value="Ribosomal_uL3_CS"/>
</dbReference>
<dbReference type="InterPro" id="IPR009000">
    <property type="entry name" value="Transl_B-barrel_sf"/>
</dbReference>
<dbReference type="NCBIfam" id="TIGR03625">
    <property type="entry name" value="L3_bact"/>
    <property type="match status" value="1"/>
</dbReference>
<dbReference type="PANTHER" id="PTHR11229">
    <property type="entry name" value="50S RIBOSOMAL PROTEIN L3"/>
    <property type="match status" value="1"/>
</dbReference>
<dbReference type="PANTHER" id="PTHR11229:SF16">
    <property type="entry name" value="LARGE RIBOSOMAL SUBUNIT PROTEIN UL3C"/>
    <property type="match status" value="1"/>
</dbReference>
<dbReference type="Pfam" id="PF00297">
    <property type="entry name" value="Ribosomal_L3"/>
    <property type="match status" value="1"/>
</dbReference>
<dbReference type="SUPFAM" id="SSF50447">
    <property type="entry name" value="Translation proteins"/>
    <property type="match status" value="1"/>
</dbReference>
<dbReference type="PROSITE" id="PS00474">
    <property type="entry name" value="RIBOSOMAL_L3"/>
    <property type="match status" value="1"/>
</dbReference>
<protein>
    <recommendedName>
        <fullName evidence="1">Large ribosomal subunit protein uL3</fullName>
    </recommendedName>
    <alternativeName>
        <fullName evidence="3">50S ribosomal protein L3</fullName>
    </alternativeName>
</protein>
<organism>
    <name type="scientific">Yersinia pestis (strain Pestoides F)</name>
    <dbReference type="NCBI Taxonomy" id="386656"/>
    <lineage>
        <taxon>Bacteria</taxon>
        <taxon>Pseudomonadati</taxon>
        <taxon>Pseudomonadota</taxon>
        <taxon>Gammaproteobacteria</taxon>
        <taxon>Enterobacterales</taxon>
        <taxon>Yersiniaceae</taxon>
        <taxon>Yersinia</taxon>
    </lineage>
</organism>
<feature type="chain" id="PRO_1000052170" description="Large ribosomal subunit protein uL3">
    <location>
        <begin position="1"/>
        <end position="209"/>
    </location>
</feature>
<feature type="region of interest" description="Disordered" evidence="2">
    <location>
        <begin position="133"/>
        <end position="152"/>
    </location>
</feature>
<feature type="modified residue" description="N5-methylglutamine" evidence="1">
    <location>
        <position position="150"/>
    </location>
</feature>
<gene>
    <name evidence="1" type="primary">rplC</name>
    <name type="ordered locus">YPDSF_0133</name>
</gene>
<keyword id="KW-0488">Methylation</keyword>
<keyword id="KW-0687">Ribonucleoprotein</keyword>
<keyword id="KW-0689">Ribosomal protein</keyword>
<keyword id="KW-0694">RNA-binding</keyword>
<keyword id="KW-0699">rRNA-binding</keyword>
<accession>A4TGZ2</accession>
<reference key="1">
    <citation type="submission" date="2007-02" db="EMBL/GenBank/DDBJ databases">
        <title>Complete sequence of chromosome of Yersinia pestis Pestoides F.</title>
        <authorList>
            <consortium name="US DOE Joint Genome Institute"/>
            <person name="Copeland A."/>
            <person name="Lucas S."/>
            <person name="Lapidus A."/>
            <person name="Barry K."/>
            <person name="Detter J.C."/>
            <person name="Glavina del Rio T."/>
            <person name="Hammon N."/>
            <person name="Israni S."/>
            <person name="Dalin E."/>
            <person name="Tice H."/>
            <person name="Pitluck S."/>
            <person name="Di Bartolo G."/>
            <person name="Chain P."/>
            <person name="Malfatti S."/>
            <person name="Shin M."/>
            <person name="Vergez L."/>
            <person name="Schmutz J."/>
            <person name="Larimer F."/>
            <person name="Land M."/>
            <person name="Hauser L."/>
            <person name="Worsham P."/>
            <person name="Chu M."/>
            <person name="Bearden S."/>
            <person name="Garcia E."/>
            <person name="Richardson P."/>
        </authorList>
    </citation>
    <scope>NUCLEOTIDE SEQUENCE [LARGE SCALE GENOMIC DNA]</scope>
    <source>
        <strain>Pestoides F</strain>
    </source>
</reference>
<evidence type="ECO:0000255" key="1">
    <source>
        <dbReference type="HAMAP-Rule" id="MF_01325"/>
    </source>
</evidence>
<evidence type="ECO:0000256" key="2">
    <source>
        <dbReference type="SAM" id="MobiDB-lite"/>
    </source>
</evidence>
<evidence type="ECO:0000305" key="3"/>
<proteinExistence type="inferred from homology"/>
<comment type="function">
    <text evidence="1">One of the primary rRNA binding proteins, it binds directly near the 3'-end of the 23S rRNA, where it nucleates assembly of the 50S subunit.</text>
</comment>
<comment type="subunit">
    <text evidence="1">Part of the 50S ribosomal subunit. Forms a cluster with proteins L14 and L19.</text>
</comment>
<comment type="PTM">
    <text evidence="1">Methylated by PrmB.</text>
</comment>
<comment type="similarity">
    <text evidence="1">Belongs to the universal ribosomal protein uL3 family.</text>
</comment>
<name>RL3_YERPP</name>